<organism>
    <name type="scientific">Neisseria meningitidis serogroup A / serotype 4A (strain DSM 15465 / Z2491)</name>
    <dbReference type="NCBI Taxonomy" id="122587"/>
    <lineage>
        <taxon>Bacteria</taxon>
        <taxon>Pseudomonadati</taxon>
        <taxon>Pseudomonadota</taxon>
        <taxon>Betaproteobacteria</taxon>
        <taxon>Neisseriales</taxon>
        <taxon>Neisseriaceae</taxon>
        <taxon>Neisseria</taxon>
    </lineage>
</organism>
<accession>P64392</accession>
<accession>A1IQY0</accession>
<accession>Q9JR90</accession>
<dbReference type="EMBL" id="AL157959">
    <property type="protein sequence ID" value="CAM08164.1"/>
    <property type="molecule type" value="Genomic_DNA"/>
</dbReference>
<dbReference type="RefSeq" id="WP_002214080.1">
    <property type="nucleotide sequence ID" value="NC_003116.1"/>
</dbReference>
<dbReference type="SMR" id="P64392"/>
<dbReference type="EnsemblBacteria" id="CAM08164">
    <property type="protein sequence ID" value="CAM08164"/>
    <property type="gene ID" value="NMA0938"/>
</dbReference>
<dbReference type="KEGG" id="nma:NMA0938"/>
<dbReference type="HOGENOM" id="CLU_105066_1_3_4"/>
<dbReference type="Proteomes" id="UP000000626">
    <property type="component" value="Chromosome"/>
</dbReference>
<dbReference type="GO" id="GO:0005829">
    <property type="term" value="C:cytosol"/>
    <property type="evidence" value="ECO:0007669"/>
    <property type="project" value="TreeGrafter"/>
</dbReference>
<dbReference type="GO" id="GO:0003677">
    <property type="term" value="F:DNA binding"/>
    <property type="evidence" value="ECO:0007669"/>
    <property type="project" value="UniProtKB-UniRule"/>
</dbReference>
<dbReference type="GO" id="GO:0030527">
    <property type="term" value="F:structural constituent of chromatin"/>
    <property type="evidence" value="ECO:0007669"/>
    <property type="project" value="InterPro"/>
</dbReference>
<dbReference type="GO" id="GO:0006310">
    <property type="term" value="P:DNA recombination"/>
    <property type="evidence" value="ECO:0007669"/>
    <property type="project" value="UniProtKB-UniRule"/>
</dbReference>
<dbReference type="GO" id="GO:0009893">
    <property type="term" value="P:positive regulation of metabolic process"/>
    <property type="evidence" value="ECO:0007669"/>
    <property type="project" value="UniProtKB-ARBA"/>
</dbReference>
<dbReference type="GO" id="GO:0006355">
    <property type="term" value="P:regulation of DNA-templated transcription"/>
    <property type="evidence" value="ECO:0007669"/>
    <property type="project" value="UniProtKB-UniRule"/>
</dbReference>
<dbReference type="GO" id="GO:0006417">
    <property type="term" value="P:regulation of translation"/>
    <property type="evidence" value="ECO:0007669"/>
    <property type="project" value="UniProtKB-UniRule"/>
</dbReference>
<dbReference type="CDD" id="cd13835">
    <property type="entry name" value="IHF_A"/>
    <property type="match status" value="1"/>
</dbReference>
<dbReference type="FunFam" id="4.10.520.10:FF:000002">
    <property type="entry name" value="Integration host factor subunit alpha"/>
    <property type="match status" value="1"/>
</dbReference>
<dbReference type="Gene3D" id="4.10.520.10">
    <property type="entry name" value="IHF-like DNA-binding proteins"/>
    <property type="match status" value="1"/>
</dbReference>
<dbReference type="HAMAP" id="MF_00380">
    <property type="entry name" value="IHF_alpha"/>
    <property type="match status" value="1"/>
</dbReference>
<dbReference type="InterPro" id="IPR000119">
    <property type="entry name" value="Hist_DNA-bd"/>
</dbReference>
<dbReference type="InterPro" id="IPR020816">
    <property type="entry name" value="Histone-like_DNA-bd_CS"/>
</dbReference>
<dbReference type="InterPro" id="IPR010992">
    <property type="entry name" value="IHF-like_DNA-bd_dom_sf"/>
</dbReference>
<dbReference type="InterPro" id="IPR005684">
    <property type="entry name" value="IHF_alpha"/>
</dbReference>
<dbReference type="NCBIfam" id="TIGR00987">
    <property type="entry name" value="himA"/>
    <property type="match status" value="1"/>
</dbReference>
<dbReference type="NCBIfam" id="NF001401">
    <property type="entry name" value="PRK00285.1"/>
    <property type="match status" value="1"/>
</dbReference>
<dbReference type="PANTHER" id="PTHR33175">
    <property type="entry name" value="DNA-BINDING PROTEIN HU"/>
    <property type="match status" value="1"/>
</dbReference>
<dbReference type="PANTHER" id="PTHR33175:SF2">
    <property type="entry name" value="INTEGRATION HOST FACTOR SUBUNIT ALPHA"/>
    <property type="match status" value="1"/>
</dbReference>
<dbReference type="Pfam" id="PF00216">
    <property type="entry name" value="Bac_DNA_binding"/>
    <property type="match status" value="1"/>
</dbReference>
<dbReference type="PRINTS" id="PR01727">
    <property type="entry name" value="DNABINDINGHU"/>
</dbReference>
<dbReference type="SMART" id="SM00411">
    <property type="entry name" value="BHL"/>
    <property type="match status" value="1"/>
</dbReference>
<dbReference type="SUPFAM" id="SSF47729">
    <property type="entry name" value="IHF-like DNA-binding proteins"/>
    <property type="match status" value="1"/>
</dbReference>
<dbReference type="PROSITE" id="PS00045">
    <property type="entry name" value="HISTONE_LIKE"/>
    <property type="match status" value="1"/>
</dbReference>
<evidence type="ECO:0000250" key="1"/>
<evidence type="ECO:0000256" key="2">
    <source>
        <dbReference type="SAM" id="MobiDB-lite"/>
    </source>
</evidence>
<evidence type="ECO:0000305" key="3"/>
<feature type="chain" id="PRO_0000105013" description="Integration host factor subunit alpha">
    <location>
        <begin position="1"/>
        <end position="100"/>
    </location>
</feature>
<feature type="region of interest" description="Disordered" evidence="2">
    <location>
        <begin position="53"/>
        <end position="72"/>
    </location>
</feature>
<protein>
    <recommendedName>
        <fullName>Integration host factor subunit alpha</fullName>
        <shortName>IHF-alpha</shortName>
    </recommendedName>
</protein>
<keyword id="KW-0233">DNA recombination</keyword>
<keyword id="KW-0238">DNA-binding</keyword>
<keyword id="KW-0804">Transcription</keyword>
<keyword id="KW-0805">Transcription regulation</keyword>
<keyword id="KW-0810">Translation regulation</keyword>
<name>IHFA_NEIMA</name>
<gene>
    <name type="primary">ihfA</name>
    <name type="synonym">himA</name>
    <name type="ordered locus">NMA0938</name>
</gene>
<reference key="1">
    <citation type="journal article" date="2000" name="Nature">
        <title>Complete DNA sequence of a serogroup A strain of Neisseria meningitidis Z2491.</title>
        <authorList>
            <person name="Parkhill J."/>
            <person name="Achtman M."/>
            <person name="James K.D."/>
            <person name="Bentley S.D."/>
            <person name="Churcher C.M."/>
            <person name="Klee S.R."/>
            <person name="Morelli G."/>
            <person name="Basham D."/>
            <person name="Brown D."/>
            <person name="Chillingworth T."/>
            <person name="Davies R.M."/>
            <person name="Davis P."/>
            <person name="Devlin K."/>
            <person name="Feltwell T."/>
            <person name="Hamlin N."/>
            <person name="Holroyd S."/>
            <person name="Jagels K."/>
            <person name="Leather S."/>
            <person name="Moule S."/>
            <person name="Mungall K.L."/>
            <person name="Quail M.A."/>
            <person name="Rajandream M.A."/>
            <person name="Rutherford K.M."/>
            <person name="Simmonds M."/>
            <person name="Skelton J."/>
            <person name="Whitehead S."/>
            <person name="Spratt B.G."/>
            <person name="Barrell B.G."/>
        </authorList>
    </citation>
    <scope>NUCLEOTIDE SEQUENCE [LARGE SCALE GENOMIC DNA]</scope>
    <source>
        <strain>DSM 15465 / Z2491</strain>
    </source>
</reference>
<comment type="function">
    <text evidence="1">This protein is one of the two subunits of integration host factor, a specific DNA-binding protein that functions in genetic recombination as well as in transcriptional and translational control.</text>
</comment>
<comment type="subunit">
    <text evidence="1">Heterodimer of an alpha and a beta chain.</text>
</comment>
<comment type="similarity">
    <text evidence="3">Belongs to the bacterial histone-like protein family.</text>
</comment>
<sequence>MTLTKAELADILVDKVSNVTKNDAKEIVELFFEEIRSTLASGEEIKISGFGNFQLRDKPQRPGRNPKTGEEVPITARRVVTFHASQKLKSMVEHYYDKQR</sequence>
<proteinExistence type="inferred from homology"/>